<gene>
    <name evidence="1" type="primary">cemA</name>
</gene>
<reference key="1">
    <citation type="journal article" date="2007" name="Mol. Phylogenet. Evol.">
        <title>Phylogenetic and evolutionary implications of complete chloroplast genome sequences of four early-diverging angiosperms: Buxus (Buxaceae), Chloranthus (Chloranthaceae), Dioscorea (Dioscoreaceae), and Illicium (Schisandraceae).</title>
        <authorList>
            <person name="Hansen D.R."/>
            <person name="Dastidar S.G."/>
            <person name="Cai Z."/>
            <person name="Penaflor C."/>
            <person name="Kuehl J.V."/>
            <person name="Boore J.L."/>
            <person name="Jansen R.K."/>
        </authorList>
    </citation>
    <scope>NUCLEOTIDE SEQUENCE [LARGE SCALE GENOMIC DNA]</scope>
</reference>
<proteinExistence type="inferred from homology"/>
<comment type="function">
    <text evidence="1">Contributes to K(+)/H(+) antiport activity by supporting proton efflux to control proton extrusion and homeostasis in chloroplasts in a light-dependent manner to modulate photosynthesis. Prevents excessive induction of non-photochemical quenching (NPQ) under continuous-light conditions. Indirectly promotes efficient inorganic carbon uptake into chloroplasts.</text>
</comment>
<comment type="catalytic activity">
    <reaction evidence="1">
        <text>K(+)(in) + H(+)(out) = K(+)(out) + H(+)(in)</text>
        <dbReference type="Rhea" id="RHEA:29467"/>
        <dbReference type="ChEBI" id="CHEBI:15378"/>
        <dbReference type="ChEBI" id="CHEBI:29103"/>
    </reaction>
</comment>
<comment type="subcellular location">
    <subcellularLocation>
        <location evidence="1">Plastid</location>
        <location evidence="1">Chloroplast inner membrane</location>
        <topology evidence="1">Multi-pass membrane protein</topology>
    </subcellularLocation>
</comment>
<comment type="similarity">
    <text evidence="1 2">Belongs to the CemA family.</text>
</comment>
<evidence type="ECO:0000255" key="1">
    <source>
        <dbReference type="HAMAP-Rule" id="MF_01308"/>
    </source>
</evidence>
<evidence type="ECO:0000305" key="2"/>
<sequence length="226" mass="26618">MAKKKAFTSLPYLASIVFLPWWISLSFNKWLESWVTNWWNTRQSETFLNDIQEKNILEKFIELEELFLLDEMIKEYPETHIQRRIHKETIQLVKMHNESHIHTILHLSTNIICFAILSGYSILGNEGLFILNSWVQEFLYNLSDTIKAFSILLLTDLCIGFHSPHGWELMIGSVYKDFGFAHNDQIISGLVSTFPVILDTILKYWIFRYLNRVSPSLVVIYHSMND</sequence>
<geneLocation type="chloroplast"/>
<name>CEMA_BUXMI</name>
<dbReference type="EMBL" id="EF380351">
    <property type="protein sequence ID" value="ABQ45261.1"/>
    <property type="molecule type" value="Genomic_DNA"/>
</dbReference>
<dbReference type="RefSeq" id="YP_001294196.1">
    <property type="nucleotide sequence ID" value="NC_009599.1"/>
</dbReference>
<dbReference type="SMR" id="A6MM48"/>
<dbReference type="GeneID" id="5236873"/>
<dbReference type="GO" id="GO:0009706">
    <property type="term" value="C:chloroplast inner membrane"/>
    <property type="evidence" value="ECO:0007669"/>
    <property type="project" value="UniProtKB-SubCell"/>
</dbReference>
<dbReference type="GO" id="GO:0015297">
    <property type="term" value="F:antiporter activity"/>
    <property type="evidence" value="ECO:0007669"/>
    <property type="project" value="UniProtKB-KW"/>
</dbReference>
<dbReference type="GO" id="GO:0015078">
    <property type="term" value="F:proton transmembrane transporter activity"/>
    <property type="evidence" value="ECO:0007669"/>
    <property type="project" value="UniProtKB-UniRule"/>
</dbReference>
<dbReference type="GO" id="GO:0006813">
    <property type="term" value="P:potassium ion transport"/>
    <property type="evidence" value="ECO:0007669"/>
    <property type="project" value="UniProtKB-UniRule"/>
</dbReference>
<dbReference type="HAMAP" id="MF_01308">
    <property type="entry name" value="CemA_PxcA"/>
    <property type="match status" value="1"/>
</dbReference>
<dbReference type="InterPro" id="IPR004282">
    <property type="entry name" value="CemA"/>
</dbReference>
<dbReference type="PANTHER" id="PTHR33650:SF2">
    <property type="entry name" value="CHLOROPLAST ENVELOPE MEMBRANE PROTEIN"/>
    <property type="match status" value="1"/>
</dbReference>
<dbReference type="PANTHER" id="PTHR33650">
    <property type="entry name" value="CHLOROPLAST ENVELOPE MEMBRANE PROTEIN-RELATED"/>
    <property type="match status" value="1"/>
</dbReference>
<dbReference type="Pfam" id="PF03040">
    <property type="entry name" value="CemA"/>
    <property type="match status" value="1"/>
</dbReference>
<keyword id="KW-0050">Antiport</keyword>
<keyword id="KW-0150">Chloroplast</keyword>
<keyword id="KW-0375">Hydrogen ion transport</keyword>
<keyword id="KW-0406">Ion transport</keyword>
<keyword id="KW-0472">Membrane</keyword>
<keyword id="KW-0934">Plastid</keyword>
<keyword id="KW-1001">Plastid inner membrane</keyword>
<keyword id="KW-0630">Potassium</keyword>
<keyword id="KW-0633">Potassium transport</keyword>
<keyword id="KW-0812">Transmembrane</keyword>
<keyword id="KW-1133">Transmembrane helix</keyword>
<keyword id="KW-0813">Transport</keyword>
<feature type="chain" id="PRO_0000323237" description="Potassium/proton antiporter CemA">
    <location>
        <begin position="1"/>
        <end position="226"/>
    </location>
</feature>
<feature type="transmembrane region" description="Helical" evidence="1">
    <location>
        <begin position="7"/>
        <end position="27"/>
    </location>
</feature>
<feature type="transmembrane region" description="Helical" evidence="1">
    <location>
        <begin position="111"/>
        <end position="131"/>
    </location>
</feature>
<feature type="transmembrane region" description="Helical" evidence="1">
    <location>
        <begin position="186"/>
        <end position="206"/>
    </location>
</feature>
<accession>A6MM48</accession>
<protein>
    <recommendedName>
        <fullName evidence="1">Potassium/proton antiporter CemA</fullName>
    </recommendedName>
    <alternativeName>
        <fullName evidence="1">Chloroplast envelope membrane protein A</fullName>
        <shortName evidence="1">CemA</shortName>
    </alternativeName>
</protein>
<organism>
    <name type="scientific">Buxus microphylla</name>
    <name type="common">Littleleaf boxwood</name>
    <name type="synonym">Japanese boxwood</name>
    <dbReference type="NCBI Taxonomy" id="153571"/>
    <lineage>
        <taxon>Eukaryota</taxon>
        <taxon>Viridiplantae</taxon>
        <taxon>Streptophyta</taxon>
        <taxon>Embryophyta</taxon>
        <taxon>Tracheophyta</taxon>
        <taxon>Spermatophyta</taxon>
        <taxon>Magnoliopsida</taxon>
        <taxon>Buxales</taxon>
        <taxon>Buxaceae</taxon>
        <taxon>Buxus</taxon>
    </lineage>
</organism>